<evidence type="ECO:0000255" key="1">
    <source>
        <dbReference type="HAMAP-Rule" id="MF_01540"/>
    </source>
</evidence>
<name>CYSI_SALDC</name>
<organism>
    <name type="scientific">Salmonella dublin (strain CT_02021853)</name>
    <dbReference type="NCBI Taxonomy" id="439851"/>
    <lineage>
        <taxon>Bacteria</taxon>
        <taxon>Pseudomonadati</taxon>
        <taxon>Pseudomonadota</taxon>
        <taxon>Gammaproteobacteria</taxon>
        <taxon>Enterobacterales</taxon>
        <taxon>Enterobacteriaceae</taxon>
        <taxon>Salmonella</taxon>
    </lineage>
</organism>
<gene>
    <name evidence="1" type="primary">cysI</name>
    <name type="ordered locus">SeD_A3259</name>
</gene>
<protein>
    <recommendedName>
        <fullName evidence="1">Sulfite reductase [NADPH] hemoprotein beta-component</fullName>
        <shortName evidence="1">SiR-HP</shortName>
        <shortName evidence="1">SiRHP</shortName>
        <ecNumber evidence="1">1.8.1.2</ecNumber>
    </recommendedName>
</protein>
<proteinExistence type="inferred from homology"/>
<reference key="1">
    <citation type="journal article" date="2011" name="J. Bacteriol.">
        <title>Comparative genomics of 28 Salmonella enterica isolates: evidence for CRISPR-mediated adaptive sublineage evolution.</title>
        <authorList>
            <person name="Fricke W.F."/>
            <person name="Mammel M.K."/>
            <person name="McDermott P.F."/>
            <person name="Tartera C."/>
            <person name="White D.G."/>
            <person name="Leclerc J.E."/>
            <person name="Ravel J."/>
            <person name="Cebula T.A."/>
        </authorList>
    </citation>
    <scope>NUCLEOTIDE SEQUENCE [LARGE SCALE GENOMIC DNA]</scope>
    <source>
        <strain>CT_02021853</strain>
    </source>
</reference>
<dbReference type="EC" id="1.8.1.2" evidence="1"/>
<dbReference type="EMBL" id="CP001144">
    <property type="protein sequence ID" value="ACH73973.1"/>
    <property type="molecule type" value="Genomic_DNA"/>
</dbReference>
<dbReference type="RefSeq" id="WP_001290672.1">
    <property type="nucleotide sequence ID" value="NC_011205.1"/>
</dbReference>
<dbReference type="SMR" id="B5FTU2"/>
<dbReference type="KEGG" id="sed:SeD_A3259"/>
<dbReference type="HOGENOM" id="CLU_001975_3_2_6"/>
<dbReference type="UniPathway" id="UPA00140">
    <property type="reaction ID" value="UER00207"/>
</dbReference>
<dbReference type="Proteomes" id="UP000008322">
    <property type="component" value="Chromosome"/>
</dbReference>
<dbReference type="GO" id="GO:0009337">
    <property type="term" value="C:sulfite reductase complex (NADPH)"/>
    <property type="evidence" value="ECO:0007669"/>
    <property type="project" value="InterPro"/>
</dbReference>
<dbReference type="GO" id="GO:0051539">
    <property type="term" value="F:4 iron, 4 sulfur cluster binding"/>
    <property type="evidence" value="ECO:0007669"/>
    <property type="project" value="UniProtKB-KW"/>
</dbReference>
<dbReference type="GO" id="GO:0020037">
    <property type="term" value="F:heme binding"/>
    <property type="evidence" value="ECO:0007669"/>
    <property type="project" value="InterPro"/>
</dbReference>
<dbReference type="GO" id="GO:0046872">
    <property type="term" value="F:metal ion binding"/>
    <property type="evidence" value="ECO:0007669"/>
    <property type="project" value="UniProtKB-KW"/>
</dbReference>
<dbReference type="GO" id="GO:0050661">
    <property type="term" value="F:NADP binding"/>
    <property type="evidence" value="ECO:0007669"/>
    <property type="project" value="InterPro"/>
</dbReference>
<dbReference type="GO" id="GO:0050311">
    <property type="term" value="F:sulfite reductase (ferredoxin) activity"/>
    <property type="evidence" value="ECO:0007669"/>
    <property type="project" value="TreeGrafter"/>
</dbReference>
<dbReference type="GO" id="GO:0004783">
    <property type="term" value="F:sulfite reductase (NADPH) activity"/>
    <property type="evidence" value="ECO:0007669"/>
    <property type="project" value="UniProtKB-UniRule"/>
</dbReference>
<dbReference type="GO" id="GO:0019344">
    <property type="term" value="P:cysteine biosynthetic process"/>
    <property type="evidence" value="ECO:0007669"/>
    <property type="project" value="UniProtKB-KW"/>
</dbReference>
<dbReference type="GO" id="GO:0070814">
    <property type="term" value="P:hydrogen sulfide biosynthetic process"/>
    <property type="evidence" value="ECO:0007669"/>
    <property type="project" value="UniProtKB-UniRule"/>
</dbReference>
<dbReference type="GO" id="GO:0000103">
    <property type="term" value="P:sulfate assimilation"/>
    <property type="evidence" value="ECO:0007669"/>
    <property type="project" value="UniProtKB-UniRule"/>
</dbReference>
<dbReference type="FunFam" id="3.30.413.10:FF:000003">
    <property type="entry name" value="Sulfite reductase [NADPH] hemoprotein beta-component"/>
    <property type="match status" value="1"/>
</dbReference>
<dbReference type="FunFam" id="3.30.413.10:FF:000004">
    <property type="entry name" value="Sulfite reductase [NADPH] hemoprotein beta-component"/>
    <property type="match status" value="1"/>
</dbReference>
<dbReference type="Gene3D" id="3.30.413.10">
    <property type="entry name" value="Sulfite Reductase Hemoprotein, domain 1"/>
    <property type="match status" value="2"/>
</dbReference>
<dbReference type="HAMAP" id="MF_01540">
    <property type="entry name" value="CysI"/>
    <property type="match status" value="1"/>
</dbReference>
<dbReference type="InterPro" id="IPR011786">
    <property type="entry name" value="CysI"/>
</dbReference>
<dbReference type="InterPro" id="IPR005117">
    <property type="entry name" value="NiRdtase/SiRdtase_haem-b_fer"/>
</dbReference>
<dbReference type="InterPro" id="IPR036136">
    <property type="entry name" value="Nit/Sulf_reduc_fer-like_dom_sf"/>
</dbReference>
<dbReference type="InterPro" id="IPR006067">
    <property type="entry name" value="NO2/SO3_Rdtase_4Fe4S_dom"/>
</dbReference>
<dbReference type="InterPro" id="IPR045169">
    <property type="entry name" value="NO2/SO3_Rdtase_4Fe4S_prot"/>
</dbReference>
<dbReference type="InterPro" id="IPR045854">
    <property type="entry name" value="NO2/SO3_Rdtase_4Fe4S_sf"/>
</dbReference>
<dbReference type="InterPro" id="IPR006066">
    <property type="entry name" value="NO2/SO3_Rdtase_FeS/sirohaem_BS"/>
</dbReference>
<dbReference type="NCBIfam" id="TIGR02041">
    <property type="entry name" value="CysI"/>
    <property type="match status" value="1"/>
</dbReference>
<dbReference type="NCBIfam" id="NF010029">
    <property type="entry name" value="PRK13504.1"/>
    <property type="match status" value="1"/>
</dbReference>
<dbReference type="PANTHER" id="PTHR11493:SF47">
    <property type="entry name" value="SULFITE REDUCTASE [NADPH] SUBUNIT BETA"/>
    <property type="match status" value="1"/>
</dbReference>
<dbReference type="PANTHER" id="PTHR11493">
    <property type="entry name" value="SULFITE REDUCTASE [NADPH] SUBUNIT BETA-RELATED"/>
    <property type="match status" value="1"/>
</dbReference>
<dbReference type="Pfam" id="PF01077">
    <property type="entry name" value="NIR_SIR"/>
    <property type="match status" value="1"/>
</dbReference>
<dbReference type="Pfam" id="PF03460">
    <property type="entry name" value="NIR_SIR_ferr"/>
    <property type="match status" value="2"/>
</dbReference>
<dbReference type="PRINTS" id="PR00397">
    <property type="entry name" value="SIROHAEM"/>
</dbReference>
<dbReference type="SUPFAM" id="SSF56014">
    <property type="entry name" value="Nitrite and sulphite reductase 4Fe-4S domain-like"/>
    <property type="match status" value="2"/>
</dbReference>
<dbReference type="SUPFAM" id="SSF55124">
    <property type="entry name" value="Nitrite/Sulfite reductase N-terminal domain-like"/>
    <property type="match status" value="2"/>
</dbReference>
<dbReference type="PROSITE" id="PS00365">
    <property type="entry name" value="NIR_SIR"/>
    <property type="match status" value="1"/>
</dbReference>
<accession>B5FTU2</accession>
<comment type="function">
    <text evidence="1">Component of the sulfite reductase complex that catalyzes the 6-electron reduction of sulfite to sulfide. This is one of several activities required for the biosynthesis of L-cysteine from sulfate.</text>
</comment>
<comment type="catalytic activity">
    <reaction evidence="1">
        <text>hydrogen sulfide + 3 NADP(+) + 3 H2O = sulfite + 3 NADPH + 4 H(+)</text>
        <dbReference type="Rhea" id="RHEA:13801"/>
        <dbReference type="ChEBI" id="CHEBI:15377"/>
        <dbReference type="ChEBI" id="CHEBI:15378"/>
        <dbReference type="ChEBI" id="CHEBI:17359"/>
        <dbReference type="ChEBI" id="CHEBI:29919"/>
        <dbReference type="ChEBI" id="CHEBI:57783"/>
        <dbReference type="ChEBI" id="CHEBI:58349"/>
        <dbReference type="EC" id="1.8.1.2"/>
    </reaction>
</comment>
<comment type="cofactor">
    <cofactor evidence="1">
        <name>siroheme</name>
        <dbReference type="ChEBI" id="CHEBI:60052"/>
    </cofactor>
    <text evidence="1">Binds 1 siroheme per subunit.</text>
</comment>
<comment type="cofactor">
    <cofactor evidence="1">
        <name>[4Fe-4S] cluster</name>
        <dbReference type="ChEBI" id="CHEBI:49883"/>
    </cofactor>
    <text evidence="1">Binds 1 [4Fe-4S] cluster per subunit.</text>
</comment>
<comment type="pathway">
    <text evidence="1">Sulfur metabolism; hydrogen sulfide biosynthesis; hydrogen sulfide from sulfite (NADPH route): step 1/1.</text>
</comment>
<comment type="subunit">
    <text evidence="1">Alpha(8)-beta(8). The alpha component is a flavoprotein, the beta component is a hemoprotein.</text>
</comment>
<comment type="similarity">
    <text evidence="1">Belongs to the nitrite and sulfite reductase 4Fe-4S domain family.</text>
</comment>
<feature type="chain" id="PRO_1000146654" description="Sulfite reductase [NADPH] hemoprotein beta-component">
    <location>
        <begin position="1"/>
        <end position="570"/>
    </location>
</feature>
<feature type="binding site" evidence="1">
    <location>
        <position position="434"/>
    </location>
    <ligand>
        <name>[4Fe-4S] cluster</name>
        <dbReference type="ChEBI" id="CHEBI:49883"/>
    </ligand>
</feature>
<feature type="binding site" evidence="1">
    <location>
        <position position="440"/>
    </location>
    <ligand>
        <name>[4Fe-4S] cluster</name>
        <dbReference type="ChEBI" id="CHEBI:49883"/>
    </ligand>
</feature>
<feature type="binding site" evidence="1">
    <location>
        <position position="479"/>
    </location>
    <ligand>
        <name>[4Fe-4S] cluster</name>
        <dbReference type="ChEBI" id="CHEBI:49883"/>
    </ligand>
</feature>
<feature type="binding site" evidence="1">
    <location>
        <position position="483"/>
    </location>
    <ligand>
        <name>[4Fe-4S] cluster</name>
        <dbReference type="ChEBI" id="CHEBI:49883"/>
    </ligand>
</feature>
<feature type="binding site" description="axial binding residue" evidence="1">
    <location>
        <position position="483"/>
    </location>
    <ligand>
        <name>siroheme</name>
        <dbReference type="ChEBI" id="CHEBI:60052"/>
    </ligand>
    <ligandPart>
        <name>Fe</name>
        <dbReference type="ChEBI" id="CHEBI:18248"/>
    </ligandPart>
</feature>
<keyword id="KW-0004">4Fe-4S</keyword>
<keyword id="KW-0028">Amino-acid biosynthesis</keyword>
<keyword id="KW-0198">Cysteine biosynthesis</keyword>
<keyword id="KW-0349">Heme</keyword>
<keyword id="KW-0408">Iron</keyword>
<keyword id="KW-0411">Iron-sulfur</keyword>
<keyword id="KW-0479">Metal-binding</keyword>
<keyword id="KW-0521">NADP</keyword>
<keyword id="KW-0560">Oxidoreductase</keyword>
<sequence length="570" mass="64043">MSEKHPGPLVVEGKLSDAERMKLESNYLRGTIAEDLNDGLTGGFKGDNFLLIRFHGMYQQDDRDIRAERAEQKLEPRHAMLLRCRLPGGVITTTQWQAIDKFAADNTIYGSIRLTNRQTFQFHGILKKNVKPVHQMLHSVGLDALATANDMNRNVLCTSNPYESQLHAEAYEWAKKISEHLLPRTRAYAEIWLDQEKVATTDEEPILGQTYLPRKFKTTVVIPPQNDIDLHANDMNFVAIAENGKLVGFNLLVGGGLSIEHGNKKTYARTASEFGYLPLEHTLAVAEAVVTTQRDWGNRTDRKNAKTKYTLERVGLETFKAEVERRAGIKFEPIRPYEFTGRGDRIGWVKGIDNNWHLTLFIENGRILDYPGRPLKTGLLEIAKIHQGEFRITANQNLIIASVPESQKAKIETLARDHGLMNAVSAQRENSMACVSFPTCPLAMAEAERFLPSFTDKVEAILEKHGIPDEHIVMRVTGCPNGCGRAMLAEIGLVGKAPGRYNLHLGGNRIGTRIPRMYQENITEPDILASLDELIGRWAKEREAGEGFGDFTVRAGIIRPVLDPARDFWE</sequence>